<proteinExistence type="evidence at transcript level"/>
<reference key="1">
    <citation type="journal article" date="2009" name="BMC Genomics">
        <title>Comprehensive EST analysis of the symbiotic sea anemone, Anemonia viridis.</title>
        <authorList>
            <person name="Sabourault C."/>
            <person name="Ganot P."/>
            <person name="Deleury E."/>
            <person name="Allemand D."/>
            <person name="Furla P."/>
        </authorList>
    </citation>
    <scope>NUCLEOTIDE SEQUENCE [MRNA]</scope>
</reference>
<reference key="2">
    <citation type="journal article" date="2011" name="BMC Genomics">
        <title>The mining of toxin-like polypeptides from EST database by single residue distribution analysis.</title>
        <authorList>
            <person name="Kozlov S."/>
            <person name="Grishin E."/>
        </authorList>
    </citation>
    <scope>NOMENCLATURE</scope>
</reference>
<reference key="3">
    <citation type="journal article" date="2012" name="Toxicon">
        <title>Development of a rational nomenclature for naming peptide and protein toxins from sea anemones.</title>
        <authorList>
            <person name="Oliveira J.S."/>
            <person name="Fuentes-Silva D."/>
            <person name="King G.F."/>
        </authorList>
    </citation>
    <scope>NOMENCLATURE</scope>
</reference>
<reference key="4">
    <citation type="journal article" date="2013" name="Mar. Drugs">
        <title>Evidence of accelerated evolution and ectodermal-specific expression of presumptive BDS toxin cDNAs from Anemonia viridis.</title>
        <authorList>
            <person name="Nicosia A."/>
            <person name="Maggio T."/>
            <person name="Mazzola S."/>
            <person name="Cuttitta A."/>
        </authorList>
    </citation>
    <scope>3D-STRUCTURE MODELING</scope>
    <scope>TISSUE SPECIFICITY</scope>
</reference>
<sequence>MNKALFLCLVVLCAAVVFAAEDLQKAKHAPFKRAARCFCPGKPDRGDLWILRGTCPGGYGYTSNCYKWPNICCYPH</sequence>
<evidence type="ECO:0000250" key="1">
    <source>
        <dbReference type="UniProtKB" id="P11494"/>
    </source>
</evidence>
<evidence type="ECO:0000255" key="2"/>
<evidence type="ECO:0000269" key="3">
    <source>
    </source>
</evidence>
<evidence type="ECO:0000303" key="4">
    <source>
    </source>
</evidence>
<evidence type="ECO:0000303" key="5">
    <source>
    </source>
</evidence>
<evidence type="ECO:0000305" key="6"/>
<name>BDSC_ANEVI</name>
<keyword id="KW-0165">Cleavage on pair of basic residues</keyword>
<keyword id="KW-1015">Disulfide bond</keyword>
<keyword id="KW-0382">Hypotensive agent</keyword>
<keyword id="KW-0872">Ion channel impairing toxin</keyword>
<keyword id="KW-0166">Nematocyst</keyword>
<keyword id="KW-0528">Neurotoxin</keyword>
<keyword id="KW-0632">Potassium channel impairing toxin</keyword>
<keyword id="KW-0964">Secreted</keyword>
<keyword id="KW-0732">Signal</keyword>
<keyword id="KW-0800">Toxin</keyword>
<keyword id="KW-1220">Voltage-gated potassium channel impairing toxin</keyword>
<organism>
    <name type="scientific">Anemonia viridis</name>
    <name type="common">Snakelocks anemone</name>
    <dbReference type="NCBI Taxonomy" id="51769"/>
    <lineage>
        <taxon>Eukaryota</taxon>
        <taxon>Metazoa</taxon>
        <taxon>Cnidaria</taxon>
        <taxon>Anthozoa</taxon>
        <taxon>Hexacorallia</taxon>
        <taxon>Actiniaria</taxon>
        <taxon>Actiniidae</taxon>
        <taxon>Anemonia</taxon>
    </lineage>
</organism>
<feature type="signal peptide" evidence="2">
    <location>
        <begin position="1"/>
        <end position="19"/>
    </location>
</feature>
<feature type="propeptide" id="PRO_0000433668" evidence="1">
    <location>
        <begin position="20"/>
        <end position="31"/>
    </location>
</feature>
<feature type="chain" id="PRO_0000433669" description="Kappa-actitoxin-Avd4l">
    <location>
        <begin position="34"/>
        <end position="76"/>
    </location>
</feature>
<feature type="disulfide bond" evidence="1">
    <location>
        <begin position="37"/>
        <end position="72"/>
    </location>
</feature>
<feature type="disulfide bond" evidence="1">
    <location>
        <begin position="39"/>
        <end position="65"/>
    </location>
</feature>
<feature type="disulfide bond" evidence="1">
    <location>
        <begin position="55"/>
        <end position="73"/>
    </location>
</feature>
<protein>
    <recommendedName>
        <fullName evidence="5">Kappa-actitoxin-Avd4l</fullName>
        <shortName evidence="5">Kappa-AITX-Avd4l</shortName>
    </recommendedName>
    <alternativeName>
        <fullName>Antihypertensive protein BDS-12</fullName>
    </alternativeName>
    <alternativeName>
        <fullName evidence="4">Blood depressing substance 12</fullName>
        <shortName evidence="4">BDS-12</shortName>
    </alternativeName>
</protein>
<accession>P0DMY6</accession>
<comment type="function">
    <text evidence="1">Blocks Kv3 voltage-gated potassium channels. Reduces blood pressure.</text>
</comment>
<comment type="subcellular location">
    <subcellularLocation>
        <location evidence="6">Secreted</location>
    </subcellularLocation>
    <subcellularLocation>
        <location evidence="6">Nematocyst</location>
    </subcellularLocation>
</comment>
<comment type="tissue specificity">
    <text evidence="3">Weakly expressed in the ectodermal tissue from the distal and proximal tentacles, body wall, and oral disk.</text>
</comment>
<comment type="similarity">
    <text evidence="6">Belongs to the sea anemone type 3 (BDS) potassium channel toxin family.</text>
</comment>
<comment type="caution">
    <text evidence="6">Opinions are divided on whether Anemonia viridis (Forsskal, 1775) and Anemonia sulcata (Pennant, 1777) are separate species.</text>
</comment>
<dbReference type="EMBL" id="FK736010">
    <property type="status" value="NOT_ANNOTATED_CDS"/>
    <property type="molecule type" value="mRNA"/>
</dbReference>
<dbReference type="SMR" id="P0DMY6"/>
<dbReference type="GO" id="GO:0005576">
    <property type="term" value="C:extracellular region"/>
    <property type="evidence" value="ECO:0007669"/>
    <property type="project" value="UniProtKB-SubCell"/>
</dbReference>
<dbReference type="GO" id="GO:0042151">
    <property type="term" value="C:nematocyst"/>
    <property type="evidence" value="ECO:0007669"/>
    <property type="project" value="UniProtKB-SubCell"/>
</dbReference>
<dbReference type="GO" id="GO:0008200">
    <property type="term" value="F:ion channel inhibitor activity"/>
    <property type="evidence" value="ECO:0007669"/>
    <property type="project" value="InterPro"/>
</dbReference>
<dbReference type="GO" id="GO:0015459">
    <property type="term" value="F:potassium channel regulator activity"/>
    <property type="evidence" value="ECO:0007669"/>
    <property type="project" value="UniProtKB-KW"/>
</dbReference>
<dbReference type="GO" id="GO:0090729">
    <property type="term" value="F:toxin activity"/>
    <property type="evidence" value="ECO:0007669"/>
    <property type="project" value="UniProtKB-KW"/>
</dbReference>
<dbReference type="GO" id="GO:0008217">
    <property type="term" value="P:regulation of blood pressure"/>
    <property type="evidence" value="ECO:0007669"/>
    <property type="project" value="UniProtKB-KW"/>
</dbReference>
<dbReference type="Gene3D" id="2.20.20.10">
    <property type="entry name" value="Anthopleurin-A"/>
    <property type="match status" value="1"/>
</dbReference>
<dbReference type="InterPro" id="IPR012414">
    <property type="entry name" value="BDS_K_chnl_tox"/>
</dbReference>
<dbReference type="InterPro" id="IPR023355">
    <property type="entry name" value="Myo_ane_neurotoxin_sf"/>
</dbReference>
<dbReference type="Pfam" id="PF07936">
    <property type="entry name" value="Defensin_4"/>
    <property type="match status" value="1"/>
</dbReference>
<dbReference type="SUPFAM" id="SSF57392">
    <property type="entry name" value="Defensin-like"/>
    <property type="match status" value="1"/>
</dbReference>